<feature type="chain" id="PRO_0000303667" description="Pyruvate decarboxylase 1">
    <location>
        <begin position="1"/>
        <end position="605"/>
    </location>
</feature>
<feature type="region of interest" description="Thiamine pyrophosphate binding">
    <location>
        <begin position="432"/>
        <end position="514"/>
    </location>
</feature>
<feature type="binding site" evidence="1">
    <location>
        <position position="67"/>
    </location>
    <ligand>
        <name>substrate</name>
    </ligand>
</feature>
<feature type="binding site" evidence="1">
    <location>
        <position position="154"/>
    </location>
    <ligand>
        <name>substrate</name>
    </ligand>
</feature>
<feature type="binding site" evidence="1">
    <location>
        <position position="482"/>
    </location>
    <ligand>
        <name>Mg(2+)</name>
        <dbReference type="ChEBI" id="CHEBI:18420"/>
    </ligand>
</feature>
<feature type="binding site" evidence="1">
    <location>
        <position position="509"/>
    </location>
    <ligand>
        <name>Mg(2+)</name>
        <dbReference type="ChEBI" id="CHEBI:18420"/>
    </ligand>
</feature>
<feature type="binding site" evidence="1">
    <location>
        <position position="511"/>
    </location>
    <ligand>
        <name>Mg(2+)</name>
        <dbReference type="ChEBI" id="CHEBI:18420"/>
    </ligand>
</feature>
<feature type="binding site" evidence="1">
    <location>
        <position position="515"/>
    </location>
    <ligand>
        <name>substrate</name>
    </ligand>
</feature>
<feature type="sequence conflict" description="In Ref. 1; AAA68290 and 2; AAC49442." evidence="2" ref="1 2">
    <original>G</original>
    <variation>R</variation>
    <location>
        <position position="42"/>
    </location>
</feature>
<feature type="sequence conflict" description="In Ref. 1; AAA68290 and 2; AAC49442." evidence="2" ref="1 2">
    <original>G</original>
    <variation>A</variation>
    <location>
        <position position="86"/>
    </location>
</feature>
<feature type="sequence conflict" description="In Ref. 1; AAA68290 and 2; AAC49442." evidence="2" ref="1 2">
    <original>RGVGACA</original>
    <variation>LVGAF</variation>
    <location>
        <begin position="104"/>
        <end position="110"/>
    </location>
</feature>
<feature type="sequence conflict" description="In Ref. 1; AAA68290 and 2; AAC49442." evidence="2" ref="1 2">
    <location>
        <position position="273"/>
    </location>
</feature>
<feature type="sequence conflict" description="In Ref. 1; AAA68290 and 2; AAC49442." evidence="2" ref="1 2">
    <original>I</original>
    <variation>F</variation>
    <location>
        <position position="282"/>
    </location>
</feature>
<sequence length="605" mass="65144">MELALVGNPSNGVAKPSCNSVGSLPVVSSNAVIHPPVTSAAGATLGRHLARRLVQIGATDVFAVPGDFNLTLLDYLIAEPGLKLIGCCNELNAGYAADGYARARGVGACAVTFTVGGLSVLNAIAGAYSENLPVICIVGGPNSNDYGTNRILHHTIGLPDFSQELRCFQTITCYQAVINNLDDAHEQIDTAIATALRESKPVYISVGCNLAGLSHPTFSREPVPLFISPRLSNKANLEYAVEAAADFLNKAVKPVMVGGPKIRVAKAKKAFAGIAESSGYPIAVMPSAKGLVPEHHPRFIGTYWGAVSTTFCAEIVESADAYLFAGPIFNDYSSVGYSLLLKREKAVIVQPDRVVVGNGPAFGCILMTEFLDALAKRLDRNTTAYDNYRRIFIPDREPPNGQPDEPLRVNILFKHIKEMLSGDTAVIAETGDSWFNCQKLRLPEGCGYEFQMQYGSIGWSVGATLGYAQAAKDKRVISCIGDGSFQMTAQDVSTMLRCGQKSIIFLINNGGYTIEVEIHDGPYNVIKNWDYTGLIDAIHNSDGNCWTKKVRTEEELIEAIATATGAKKDCLCFIEIIVHKDDTSKELLEWGSRVSAANSRPPNPQ</sequence>
<keyword id="KW-0210">Decarboxylase</keyword>
<keyword id="KW-0456">Lyase</keyword>
<keyword id="KW-0460">Magnesium</keyword>
<keyword id="KW-0479">Metal-binding</keyword>
<keyword id="KW-1185">Reference proteome</keyword>
<keyword id="KW-0786">Thiamine pyrophosphate</keyword>
<name>PDC1_ORYSI</name>
<comment type="catalytic activity">
    <reaction>
        <text>a 2-oxocarboxylate + H(+) = an aldehyde + CO2</text>
        <dbReference type="Rhea" id="RHEA:11628"/>
        <dbReference type="ChEBI" id="CHEBI:15378"/>
        <dbReference type="ChEBI" id="CHEBI:16526"/>
        <dbReference type="ChEBI" id="CHEBI:17478"/>
        <dbReference type="ChEBI" id="CHEBI:35179"/>
        <dbReference type="EC" id="4.1.1.1"/>
    </reaction>
</comment>
<comment type="cofactor">
    <cofactor>
        <name>a metal cation</name>
        <dbReference type="ChEBI" id="CHEBI:25213"/>
    </cofactor>
    <text>Binds 1 metal ion per subunit.</text>
</comment>
<comment type="cofactor">
    <cofactor>
        <name>thiamine diphosphate</name>
        <dbReference type="ChEBI" id="CHEBI:58937"/>
    </cofactor>
    <text>Binds 1 thiamine pyrophosphate per subunit.</text>
</comment>
<comment type="subunit">
    <text evidence="2">Homotetramer.</text>
</comment>
<comment type="similarity">
    <text evidence="2">Belongs to the TPP enzyme family.</text>
</comment>
<organism>
    <name type="scientific">Oryza sativa subsp. indica</name>
    <name type="common">Rice</name>
    <dbReference type="NCBI Taxonomy" id="39946"/>
    <lineage>
        <taxon>Eukaryota</taxon>
        <taxon>Viridiplantae</taxon>
        <taxon>Streptophyta</taxon>
        <taxon>Embryophyta</taxon>
        <taxon>Tracheophyta</taxon>
        <taxon>Spermatophyta</taxon>
        <taxon>Magnoliopsida</taxon>
        <taxon>Liliopsida</taxon>
        <taxon>Poales</taxon>
        <taxon>Poaceae</taxon>
        <taxon>BOP clade</taxon>
        <taxon>Oryzoideae</taxon>
        <taxon>Oryzeae</taxon>
        <taxon>Oryzinae</taxon>
        <taxon>Oryza</taxon>
        <taxon>Oryza sativa</taxon>
    </lineage>
</organism>
<accession>A2Y5L9</accession>
<accession>P51847</accession>
<accession>Q6AUJ9</accession>
<reference key="1">
    <citation type="journal article" date="1994" name="Plant Physiol.">
        <title>Sequence of a cDNA from Oryza sativa (L.) encoding the pyruvate decarboxylase 1 gene.</title>
        <authorList>
            <person name="Hossain M.A."/>
            <person name="Hug E."/>
            <person name="Hodges T.K."/>
        </authorList>
    </citation>
    <scope>NUCLEOTIDE SEQUENCE [MRNA]</scope>
    <source>
        <strain>cv. IR54</strain>
        <tissue>Callus</tissue>
    </source>
</reference>
<reference key="2">
    <citation type="journal article" date="1996" name="Plant Mol. Biol.">
        <title>Characterization of pyruvate decarboxylase genes from rice.</title>
        <authorList>
            <person name="Hossain M.A."/>
            <person name="Huq E."/>
            <person name="Grover A."/>
            <person name="Dennis E.S."/>
            <person name="Peacock W.J."/>
            <person name="Hodges T.K."/>
        </authorList>
    </citation>
    <scope>NUCLEOTIDE SEQUENCE [GENOMIC DNA]</scope>
    <source>
        <strain>cv. IR54</strain>
        <tissue>Callus</tissue>
    </source>
</reference>
<reference key="3">
    <citation type="journal article" date="2005" name="PLoS Biol.">
        <title>The genomes of Oryza sativa: a history of duplications.</title>
        <authorList>
            <person name="Yu J."/>
            <person name="Wang J."/>
            <person name="Lin W."/>
            <person name="Li S."/>
            <person name="Li H."/>
            <person name="Zhou J."/>
            <person name="Ni P."/>
            <person name="Dong W."/>
            <person name="Hu S."/>
            <person name="Zeng C."/>
            <person name="Zhang J."/>
            <person name="Zhang Y."/>
            <person name="Li R."/>
            <person name="Xu Z."/>
            <person name="Li S."/>
            <person name="Li X."/>
            <person name="Zheng H."/>
            <person name="Cong L."/>
            <person name="Lin L."/>
            <person name="Yin J."/>
            <person name="Geng J."/>
            <person name="Li G."/>
            <person name="Shi J."/>
            <person name="Liu J."/>
            <person name="Lv H."/>
            <person name="Li J."/>
            <person name="Wang J."/>
            <person name="Deng Y."/>
            <person name="Ran L."/>
            <person name="Shi X."/>
            <person name="Wang X."/>
            <person name="Wu Q."/>
            <person name="Li C."/>
            <person name="Ren X."/>
            <person name="Wang J."/>
            <person name="Wang X."/>
            <person name="Li D."/>
            <person name="Liu D."/>
            <person name="Zhang X."/>
            <person name="Ji Z."/>
            <person name="Zhao W."/>
            <person name="Sun Y."/>
            <person name="Zhang Z."/>
            <person name="Bao J."/>
            <person name="Han Y."/>
            <person name="Dong L."/>
            <person name="Ji J."/>
            <person name="Chen P."/>
            <person name="Wu S."/>
            <person name="Liu J."/>
            <person name="Xiao Y."/>
            <person name="Bu D."/>
            <person name="Tan J."/>
            <person name="Yang L."/>
            <person name="Ye C."/>
            <person name="Zhang J."/>
            <person name="Xu J."/>
            <person name="Zhou Y."/>
            <person name="Yu Y."/>
            <person name="Zhang B."/>
            <person name="Zhuang S."/>
            <person name="Wei H."/>
            <person name="Liu B."/>
            <person name="Lei M."/>
            <person name="Yu H."/>
            <person name="Li Y."/>
            <person name="Xu H."/>
            <person name="Wei S."/>
            <person name="He X."/>
            <person name="Fang L."/>
            <person name="Zhang Z."/>
            <person name="Zhang Y."/>
            <person name="Huang X."/>
            <person name="Su Z."/>
            <person name="Tong W."/>
            <person name="Li J."/>
            <person name="Tong Z."/>
            <person name="Li S."/>
            <person name="Ye J."/>
            <person name="Wang L."/>
            <person name="Fang L."/>
            <person name="Lei T."/>
            <person name="Chen C.-S."/>
            <person name="Chen H.-C."/>
            <person name="Xu Z."/>
            <person name="Li H."/>
            <person name="Huang H."/>
            <person name="Zhang F."/>
            <person name="Xu H."/>
            <person name="Li N."/>
            <person name="Zhao C."/>
            <person name="Li S."/>
            <person name="Dong L."/>
            <person name="Huang Y."/>
            <person name="Li L."/>
            <person name="Xi Y."/>
            <person name="Qi Q."/>
            <person name="Li W."/>
            <person name="Zhang B."/>
            <person name="Hu W."/>
            <person name="Zhang Y."/>
            <person name="Tian X."/>
            <person name="Jiao Y."/>
            <person name="Liang X."/>
            <person name="Jin J."/>
            <person name="Gao L."/>
            <person name="Zheng W."/>
            <person name="Hao B."/>
            <person name="Liu S.-M."/>
            <person name="Wang W."/>
            <person name="Yuan L."/>
            <person name="Cao M."/>
            <person name="McDermott J."/>
            <person name="Samudrala R."/>
            <person name="Wang J."/>
            <person name="Wong G.K.-S."/>
            <person name="Yang H."/>
        </authorList>
    </citation>
    <scope>NUCLEOTIDE SEQUENCE [LARGE SCALE GENOMIC DNA]</scope>
    <source>
        <strain>cv. 93-11</strain>
    </source>
</reference>
<evidence type="ECO:0000250" key="1"/>
<evidence type="ECO:0000305" key="2"/>
<dbReference type="EC" id="4.1.1.1"/>
<dbReference type="EMBL" id="U07339">
    <property type="protein sequence ID" value="AAA68290.1"/>
    <property type="molecule type" value="mRNA"/>
</dbReference>
<dbReference type="EMBL" id="U26660">
    <property type="protein sequence ID" value="AAC49442.1"/>
    <property type="molecule type" value="Genomic_DNA"/>
</dbReference>
<dbReference type="EMBL" id="CM000130">
    <property type="protein sequence ID" value="EAY98379.1"/>
    <property type="molecule type" value="Genomic_DNA"/>
</dbReference>
<dbReference type="PIR" id="S71557">
    <property type="entry name" value="S71557"/>
</dbReference>
<dbReference type="SMR" id="A2Y5L9"/>
<dbReference type="STRING" id="39946.A2Y5L9"/>
<dbReference type="EnsemblPlants" id="BGIOSGA020021-TA">
    <property type="protein sequence ID" value="BGIOSGA020021-PA"/>
    <property type="gene ID" value="BGIOSGA020021"/>
</dbReference>
<dbReference type="EnsemblPlants" id="OsLima_05g0020170.01">
    <property type="protein sequence ID" value="OsLima_05g0020170.01"/>
    <property type="gene ID" value="OsLima_05g0020170"/>
</dbReference>
<dbReference type="EnsemblPlants" id="OsLiXu_05g0020310.01">
    <property type="protein sequence ID" value="OsLiXu_05g0020310.01"/>
    <property type="gene ID" value="OsLiXu_05g0020310"/>
</dbReference>
<dbReference type="EnsemblPlants" id="OsMH63_05G020340_01">
    <property type="protein sequence ID" value="OsMH63_05G020340_01"/>
    <property type="gene ID" value="OsMH63_05G020340"/>
</dbReference>
<dbReference type="EnsemblPlants" id="OsPr106_05g0020340.01">
    <property type="protein sequence ID" value="OsPr106_05g0020340.01"/>
    <property type="gene ID" value="OsPr106_05g0020340"/>
</dbReference>
<dbReference type="EnsemblPlants" id="OsZS97_05G020530_02">
    <property type="protein sequence ID" value="OsZS97_05G020530_02"/>
    <property type="gene ID" value="OsZS97_05G020530"/>
</dbReference>
<dbReference type="Gramene" id="BGIOSGA020021-TA">
    <property type="protein sequence ID" value="BGIOSGA020021-PA"/>
    <property type="gene ID" value="BGIOSGA020021"/>
</dbReference>
<dbReference type="Gramene" id="OsLima_05g0020170.01">
    <property type="protein sequence ID" value="OsLima_05g0020170.01"/>
    <property type="gene ID" value="OsLima_05g0020170"/>
</dbReference>
<dbReference type="Gramene" id="OsLiXu_05g0020310.01">
    <property type="protein sequence ID" value="OsLiXu_05g0020310.01"/>
    <property type="gene ID" value="OsLiXu_05g0020310"/>
</dbReference>
<dbReference type="Gramene" id="OsMH63_05G020340_01">
    <property type="protein sequence ID" value="OsMH63_05G020340_01"/>
    <property type="gene ID" value="OsMH63_05G020340"/>
</dbReference>
<dbReference type="Gramene" id="OsPr106_05g0020340.01">
    <property type="protein sequence ID" value="OsPr106_05g0020340.01"/>
    <property type="gene ID" value="OsPr106_05g0020340"/>
</dbReference>
<dbReference type="Gramene" id="OsZS97_05G020530_02">
    <property type="protein sequence ID" value="OsZS97_05G020530_02"/>
    <property type="gene ID" value="OsZS97_05G020530"/>
</dbReference>
<dbReference type="HOGENOM" id="CLU_013748_0_2_1"/>
<dbReference type="OMA" id="AQEISVM"/>
<dbReference type="Proteomes" id="UP000007015">
    <property type="component" value="Chromosome 5"/>
</dbReference>
<dbReference type="GO" id="GO:0005829">
    <property type="term" value="C:cytosol"/>
    <property type="evidence" value="ECO:0007669"/>
    <property type="project" value="TreeGrafter"/>
</dbReference>
<dbReference type="GO" id="GO:0000287">
    <property type="term" value="F:magnesium ion binding"/>
    <property type="evidence" value="ECO:0007669"/>
    <property type="project" value="InterPro"/>
</dbReference>
<dbReference type="GO" id="GO:0004737">
    <property type="term" value="F:pyruvate decarboxylase activity"/>
    <property type="evidence" value="ECO:0007669"/>
    <property type="project" value="UniProtKB-EC"/>
</dbReference>
<dbReference type="GO" id="GO:0030976">
    <property type="term" value="F:thiamine pyrophosphate binding"/>
    <property type="evidence" value="ECO:0007669"/>
    <property type="project" value="InterPro"/>
</dbReference>
<dbReference type="GO" id="GO:0000949">
    <property type="term" value="P:aromatic amino acid family catabolic process to alcohol via Ehrlich pathway"/>
    <property type="evidence" value="ECO:0007669"/>
    <property type="project" value="TreeGrafter"/>
</dbReference>
<dbReference type="CDD" id="cd02005">
    <property type="entry name" value="TPP_PDC_IPDC"/>
    <property type="match status" value="1"/>
</dbReference>
<dbReference type="CDD" id="cd07038">
    <property type="entry name" value="TPP_PYR_PDC_IPDC_like"/>
    <property type="match status" value="1"/>
</dbReference>
<dbReference type="FunFam" id="3.40.50.1220:FF:000009">
    <property type="entry name" value="Pyruvate decarboxylase 1"/>
    <property type="match status" value="1"/>
</dbReference>
<dbReference type="FunFam" id="3.40.50.970:FF:000021">
    <property type="entry name" value="Pyruvate decarboxylase 1"/>
    <property type="match status" value="1"/>
</dbReference>
<dbReference type="FunFam" id="3.40.50.970:FF:000017">
    <property type="entry name" value="pyruvate decarboxylase 1"/>
    <property type="match status" value="1"/>
</dbReference>
<dbReference type="Gene3D" id="3.40.50.970">
    <property type="match status" value="2"/>
</dbReference>
<dbReference type="Gene3D" id="3.40.50.1220">
    <property type="entry name" value="TPP-binding domain"/>
    <property type="match status" value="1"/>
</dbReference>
<dbReference type="InterPro" id="IPR029035">
    <property type="entry name" value="DHS-like_NAD/FAD-binding_dom"/>
</dbReference>
<dbReference type="InterPro" id="IPR012110">
    <property type="entry name" value="PDC/IPDC-like"/>
</dbReference>
<dbReference type="InterPro" id="IPR029061">
    <property type="entry name" value="THDP-binding"/>
</dbReference>
<dbReference type="InterPro" id="IPR012000">
    <property type="entry name" value="Thiamin_PyroP_enz_cen_dom"/>
</dbReference>
<dbReference type="InterPro" id="IPR012001">
    <property type="entry name" value="Thiamin_PyroP_enz_TPP-bd_dom"/>
</dbReference>
<dbReference type="InterPro" id="IPR011766">
    <property type="entry name" value="TPP_enzyme_TPP-bd"/>
</dbReference>
<dbReference type="InterPro" id="IPR047214">
    <property type="entry name" value="TPP_PDC_IPDC"/>
</dbReference>
<dbReference type="InterPro" id="IPR047213">
    <property type="entry name" value="TPP_PYR_PDC_IPDC-like"/>
</dbReference>
<dbReference type="PANTHER" id="PTHR43452">
    <property type="entry name" value="PYRUVATE DECARBOXYLASE"/>
    <property type="match status" value="1"/>
</dbReference>
<dbReference type="PANTHER" id="PTHR43452:SF7">
    <property type="entry name" value="PYRUVATE DECARBOXYLASE 1"/>
    <property type="match status" value="1"/>
</dbReference>
<dbReference type="Pfam" id="PF02775">
    <property type="entry name" value="TPP_enzyme_C"/>
    <property type="match status" value="1"/>
</dbReference>
<dbReference type="Pfam" id="PF00205">
    <property type="entry name" value="TPP_enzyme_M"/>
    <property type="match status" value="1"/>
</dbReference>
<dbReference type="Pfam" id="PF02776">
    <property type="entry name" value="TPP_enzyme_N"/>
    <property type="match status" value="1"/>
</dbReference>
<dbReference type="PIRSF" id="PIRSF036565">
    <property type="entry name" value="Pyruvt_ip_decrb"/>
    <property type="match status" value="1"/>
</dbReference>
<dbReference type="SUPFAM" id="SSF52467">
    <property type="entry name" value="DHS-like NAD/FAD-binding domain"/>
    <property type="match status" value="1"/>
</dbReference>
<dbReference type="SUPFAM" id="SSF52518">
    <property type="entry name" value="Thiamin diphosphate-binding fold (THDP-binding)"/>
    <property type="match status" value="2"/>
</dbReference>
<gene>
    <name type="primary">PDC1</name>
    <name type="ORF">OsI_019612</name>
</gene>
<proteinExistence type="evidence at transcript level"/>
<protein>
    <recommendedName>
        <fullName>Pyruvate decarboxylase 1</fullName>
        <shortName>PDC</shortName>
        <ecNumber>4.1.1.1</ecNumber>
    </recommendedName>
</protein>